<accession>B9KCR8</accession>
<gene>
    <name evidence="1" type="primary">groES</name>
    <name evidence="1" type="synonym">groS</name>
    <name type="ordered locus">Cla_1035</name>
</gene>
<reference key="1">
    <citation type="journal article" date="2008" name="Foodborne Pathog. Dis.">
        <title>The complete genome sequence and analysis of the human pathogen Campylobacter lari.</title>
        <authorList>
            <person name="Miller W.G."/>
            <person name="Wang G."/>
            <person name="Binnewies T.T."/>
            <person name="Parker C.T."/>
        </authorList>
    </citation>
    <scope>NUCLEOTIDE SEQUENCE [LARGE SCALE GENOMIC DNA]</scope>
    <source>
        <strain>RM2100 / D67 / ATCC BAA-1060</strain>
    </source>
</reference>
<proteinExistence type="inferred from homology"/>
<sequence>MNFQPLGKRILVKRLEEMKTTASGIIIPDNAKEKPLNGEVAAVSKEIEDVKVNDKVMFAKYGGTEIKLDNEEYLVLNIEDVLGIIK</sequence>
<comment type="function">
    <text evidence="1">Together with the chaperonin GroEL, plays an essential role in assisting protein folding. The GroEL-GroES system forms a nano-cage that allows encapsulation of the non-native substrate proteins and provides a physical environment optimized to promote and accelerate protein folding. GroES binds to the apical surface of the GroEL ring, thereby capping the opening of the GroEL channel.</text>
</comment>
<comment type="subunit">
    <text evidence="1">Heptamer of 7 subunits arranged in a ring. Interacts with the chaperonin GroEL.</text>
</comment>
<comment type="subcellular location">
    <subcellularLocation>
        <location evidence="1">Cytoplasm</location>
    </subcellularLocation>
</comment>
<comment type="similarity">
    <text evidence="1">Belongs to the GroES chaperonin family.</text>
</comment>
<feature type="chain" id="PRO_1000146894" description="Co-chaperonin GroES">
    <location>
        <begin position="1"/>
        <end position="86"/>
    </location>
</feature>
<keyword id="KW-0143">Chaperone</keyword>
<keyword id="KW-0963">Cytoplasm</keyword>
<keyword id="KW-1185">Reference proteome</keyword>
<dbReference type="EMBL" id="CP000932">
    <property type="protein sequence ID" value="ACM64357.1"/>
    <property type="molecule type" value="Genomic_DNA"/>
</dbReference>
<dbReference type="RefSeq" id="WP_012661740.1">
    <property type="nucleotide sequence ID" value="NC_012039.1"/>
</dbReference>
<dbReference type="SMR" id="B9KCR8"/>
<dbReference type="STRING" id="306263.Cla_1035"/>
<dbReference type="KEGG" id="cla:CLA_1035"/>
<dbReference type="PATRIC" id="fig|306263.5.peg.1019"/>
<dbReference type="eggNOG" id="COG0234">
    <property type="taxonomic scope" value="Bacteria"/>
</dbReference>
<dbReference type="HOGENOM" id="CLU_132825_2_0_7"/>
<dbReference type="Proteomes" id="UP000007727">
    <property type="component" value="Chromosome"/>
</dbReference>
<dbReference type="GO" id="GO:0005737">
    <property type="term" value="C:cytoplasm"/>
    <property type="evidence" value="ECO:0007669"/>
    <property type="project" value="UniProtKB-SubCell"/>
</dbReference>
<dbReference type="GO" id="GO:0005524">
    <property type="term" value="F:ATP binding"/>
    <property type="evidence" value="ECO:0007669"/>
    <property type="project" value="InterPro"/>
</dbReference>
<dbReference type="GO" id="GO:0046872">
    <property type="term" value="F:metal ion binding"/>
    <property type="evidence" value="ECO:0007669"/>
    <property type="project" value="TreeGrafter"/>
</dbReference>
<dbReference type="GO" id="GO:0044183">
    <property type="term" value="F:protein folding chaperone"/>
    <property type="evidence" value="ECO:0007669"/>
    <property type="project" value="InterPro"/>
</dbReference>
<dbReference type="GO" id="GO:0051087">
    <property type="term" value="F:protein-folding chaperone binding"/>
    <property type="evidence" value="ECO:0007669"/>
    <property type="project" value="TreeGrafter"/>
</dbReference>
<dbReference type="GO" id="GO:0051082">
    <property type="term" value="F:unfolded protein binding"/>
    <property type="evidence" value="ECO:0007669"/>
    <property type="project" value="TreeGrafter"/>
</dbReference>
<dbReference type="GO" id="GO:0051085">
    <property type="term" value="P:chaperone cofactor-dependent protein refolding"/>
    <property type="evidence" value="ECO:0007669"/>
    <property type="project" value="TreeGrafter"/>
</dbReference>
<dbReference type="CDD" id="cd00320">
    <property type="entry name" value="cpn10"/>
    <property type="match status" value="1"/>
</dbReference>
<dbReference type="FunFam" id="2.30.33.40:FF:000001">
    <property type="entry name" value="10 kDa chaperonin"/>
    <property type="match status" value="1"/>
</dbReference>
<dbReference type="Gene3D" id="2.30.33.40">
    <property type="entry name" value="GroES chaperonin"/>
    <property type="match status" value="1"/>
</dbReference>
<dbReference type="HAMAP" id="MF_00580">
    <property type="entry name" value="CH10"/>
    <property type="match status" value="1"/>
</dbReference>
<dbReference type="InterPro" id="IPR020818">
    <property type="entry name" value="Chaperonin_GroES"/>
</dbReference>
<dbReference type="InterPro" id="IPR037124">
    <property type="entry name" value="Chaperonin_GroES_sf"/>
</dbReference>
<dbReference type="InterPro" id="IPR011032">
    <property type="entry name" value="GroES-like_sf"/>
</dbReference>
<dbReference type="NCBIfam" id="NF001537">
    <property type="entry name" value="PRK00364.3-3"/>
    <property type="match status" value="1"/>
</dbReference>
<dbReference type="PANTHER" id="PTHR10772">
    <property type="entry name" value="10 KDA HEAT SHOCK PROTEIN"/>
    <property type="match status" value="1"/>
</dbReference>
<dbReference type="PANTHER" id="PTHR10772:SF58">
    <property type="entry name" value="CO-CHAPERONIN GROES"/>
    <property type="match status" value="1"/>
</dbReference>
<dbReference type="Pfam" id="PF00166">
    <property type="entry name" value="Cpn10"/>
    <property type="match status" value="1"/>
</dbReference>
<dbReference type="PRINTS" id="PR00297">
    <property type="entry name" value="CHAPERONIN10"/>
</dbReference>
<dbReference type="SMART" id="SM00883">
    <property type="entry name" value="Cpn10"/>
    <property type="match status" value="1"/>
</dbReference>
<dbReference type="SUPFAM" id="SSF50129">
    <property type="entry name" value="GroES-like"/>
    <property type="match status" value="1"/>
</dbReference>
<evidence type="ECO:0000255" key="1">
    <source>
        <dbReference type="HAMAP-Rule" id="MF_00580"/>
    </source>
</evidence>
<protein>
    <recommendedName>
        <fullName evidence="1">Co-chaperonin GroES</fullName>
    </recommendedName>
    <alternativeName>
        <fullName evidence="1">10 kDa chaperonin</fullName>
    </alternativeName>
    <alternativeName>
        <fullName evidence="1">Chaperonin-10</fullName>
        <shortName evidence="1">Cpn10</shortName>
    </alternativeName>
</protein>
<name>CH10_CAMLR</name>
<organism>
    <name type="scientific">Campylobacter lari (strain RM2100 / D67 / ATCC BAA-1060)</name>
    <dbReference type="NCBI Taxonomy" id="306263"/>
    <lineage>
        <taxon>Bacteria</taxon>
        <taxon>Pseudomonadati</taxon>
        <taxon>Campylobacterota</taxon>
        <taxon>Epsilonproteobacteria</taxon>
        <taxon>Campylobacterales</taxon>
        <taxon>Campylobacteraceae</taxon>
        <taxon>Campylobacter</taxon>
    </lineage>
</organism>